<protein>
    <recommendedName>
        <fullName>Iroquois-class homeodomain protein irx-3</fullName>
    </recommendedName>
    <alternativeName>
        <fullName evidence="1 8">Iroquois homeobox protein 3</fullName>
    </alternativeName>
</protein>
<dbReference type="EMBL" id="CR760274">
    <property type="protein sequence ID" value="CAJ82766.1"/>
    <property type="molecule type" value="mRNA"/>
</dbReference>
<dbReference type="EMBL" id="BC067972">
    <property type="protein sequence ID" value="AAH67972.1"/>
    <property type="molecule type" value="mRNA"/>
</dbReference>
<dbReference type="RefSeq" id="NP_001001216.1">
    <property type="nucleotide sequence ID" value="NM_001001216.1"/>
</dbReference>
<dbReference type="SMR" id="Q6NVN3"/>
<dbReference type="FunCoup" id="Q6NVN3">
    <property type="interactions" value="576"/>
</dbReference>
<dbReference type="STRING" id="8364.ENSXETP00000007350"/>
<dbReference type="PaxDb" id="8364-ENSXETP00000012797"/>
<dbReference type="DNASU" id="407888"/>
<dbReference type="GeneID" id="407888"/>
<dbReference type="KEGG" id="xtr:407888"/>
<dbReference type="AGR" id="Xenbase:XB-GENE-480486"/>
<dbReference type="CTD" id="79191"/>
<dbReference type="Xenbase" id="XB-GENE-480486">
    <property type="gene designation" value="irx3"/>
</dbReference>
<dbReference type="eggNOG" id="KOG0773">
    <property type="taxonomic scope" value="Eukaryota"/>
</dbReference>
<dbReference type="HOGENOM" id="CLU_042927_0_1_1"/>
<dbReference type="InParanoid" id="Q6NVN3"/>
<dbReference type="OMA" id="QPACEQI"/>
<dbReference type="OrthoDB" id="5399138at2759"/>
<dbReference type="PhylomeDB" id="Q6NVN3"/>
<dbReference type="TreeFam" id="TF319371"/>
<dbReference type="Proteomes" id="UP000008143">
    <property type="component" value="Chromosome 4"/>
</dbReference>
<dbReference type="GO" id="GO:0005737">
    <property type="term" value="C:cytoplasm"/>
    <property type="evidence" value="ECO:0000250"/>
    <property type="project" value="UniProtKB"/>
</dbReference>
<dbReference type="GO" id="GO:0005634">
    <property type="term" value="C:nucleus"/>
    <property type="evidence" value="ECO:0000250"/>
    <property type="project" value="UniProtKB"/>
</dbReference>
<dbReference type="GO" id="GO:0003677">
    <property type="term" value="F:DNA binding"/>
    <property type="evidence" value="ECO:0007669"/>
    <property type="project" value="UniProtKB-KW"/>
</dbReference>
<dbReference type="GO" id="GO:0000981">
    <property type="term" value="F:DNA-binding transcription factor activity, RNA polymerase II-specific"/>
    <property type="evidence" value="ECO:0007669"/>
    <property type="project" value="InterPro"/>
</dbReference>
<dbReference type="GO" id="GO:0007420">
    <property type="term" value="P:brain development"/>
    <property type="evidence" value="ECO:0000250"/>
    <property type="project" value="UniProtKB"/>
</dbReference>
<dbReference type="GO" id="GO:0030154">
    <property type="term" value="P:cell differentiation"/>
    <property type="evidence" value="ECO:0007669"/>
    <property type="project" value="UniProtKB-KW"/>
</dbReference>
<dbReference type="GO" id="GO:0009953">
    <property type="term" value="P:dorsal/ventral pattern formation"/>
    <property type="evidence" value="ECO:0000250"/>
    <property type="project" value="UniProtKB"/>
</dbReference>
<dbReference type="GO" id="GO:0045665">
    <property type="term" value="P:negative regulation of neuron differentiation"/>
    <property type="evidence" value="ECO:0000250"/>
    <property type="project" value="UniProtKB"/>
</dbReference>
<dbReference type="GO" id="GO:0000122">
    <property type="term" value="P:negative regulation of transcription by RNA polymerase II"/>
    <property type="evidence" value="ECO:0000250"/>
    <property type="project" value="UniProtKB"/>
</dbReference>
<dbReference type="GO" id="GO:0001840">
    <property type="term" value="P:neural plate development"/>
    <property type="evidence" value="ECO:0000250"/>
    <property type="project" value="UniProtKB"/>
</dbReference>
<dbReference type="GO" id="GO:0045893">
    <property type="term" value="P:positive regulation of DNA-templated transcription"/>
    <property type="evidence" value="ECO:0000250"/>
    <property type="project" value="UniProtKB"/>
</dbReference>
<dbReference type="GO" id="GO:0045666">
    <property type="term" value="P:positive regulation of neuron differentiation"/>
    <property type="evidence" value="ECO:0000250"/>
    <property type="project" value="UniProtKB"/>
</dbReference>
<dbReference type="GO" id="GO:0045944">
    <property type="term" value="P:positive regulation of transcription by RNA polymerase II"/>
    <property type="evidence" value="ECO:0000250"/>
    <property type="project" value="UniProtKB"/>
</dbReference>
<dbReference type="GO" id="GO:0048793">
    <property type="term" value="P:pronephros development"/>
    <property type="evidence" value="ECO:0000250"/>
    <property type="project" value="UniProtKB"/>
</dbReference>
<dbReference type="GO" id="GO:0009954">
    <property type="term" value="P:proximal/distal pattern formation"/>
    <property type="evidence" value="ECO:0007669"/>
    <property type="project" value="UniProtKB-ARBA"/>
</dbReference>
<dbReference type="CDD" id="cd00086">
    <property type="entry name" value="homeodomain"/>
    <property type="match status" value="1"/>
</dbReference>
<dbReference type="FunFam" id="1.10.10.60:FF:000003">
    <property type="entry name" value="Iroquois-class homeobox protein IRX"/>
    <property type="match status" value="1"/>
</dbReference>
<dbReference type="Gene3D" id="1.10.10.60">
    <property type="entry name" value="Homeodomain-like"/>
    <property type="match status" value="1"/>
</dbReference>
<dbReference type="InterPro" id="IPR001356">
    <property type="entry name" value="HD"/>
</dbReference>
<dbReference type="InterPro" id="IPR017970">
    <property type="entry name" value="Homeobox_CS"/>
</dbReference>
<dbReference type="InterPro" id="IPR009057">
    <property type="entry name" value="Homeodomain-like_sf"/>
</dbReference>
<dbReference type="InterPro" id="IPR003893">
    <property type="entry name" value="Iroquois_homeo"/>
</dbReference>
<dbReference type="InterPro" id="IPR008422">
    <property type="entry name" value="KN_HD"/>
</dbReference>
<dbReference type="PANTHER" id="PTHR11211">
    <property type="entry name" value="IROQUOIS-CLASS HOMEODOMAIN PROTEIN IRX"/>
    <property type="match status" value="1"/>
</dbReference>
<dbReference type="PANTHER" id="PTHR11211:SF14">
    <property type="entry name" value="IROQUOIS-CLASS HOMEODOMAIN PROTEIN IRX-3"/>
    <property type="match status" value="1"/>
</dbReference>
<dbReference type="Pfam" id="PF05920">
    <property type="entry name" value="Homeobox_KN"/>
    <property type="match status" value="1"/>
</dbReference>
<dbReference type="SMART" id="SM00389">
    <property type="entry name" value="HOX"/>
    <property type="match status" value="1"/>
</dbReference>
<dbReference type="SMART" id="SM00548">
    <property type="entry name" value="IRO"/>
    <property type="match status" value="1"/>
</dbReference>
<dbReference type="SUPFAM" id="SSF46689">
    <property type="entry name" value="Homeodomain-like"/>
    <property type="match status" value="1"/>
</dbReference>
<dbReference type="PROSITE" id="PS00027">
    <property type="entry name" value="HOMEOBOX_1"/>
    <property type="match status" value="1"/>
</dbReference>
<dbReference type="PROSITE" id="PS50071">
    <property type="entry name" value="HOMEOBOX_2"/>
    <property type="match status" value="1"/>
</dbReference>
<feature type="chain" id="PRO_0000386622" description="Iroquois-class homeodomain protein irx-3">
    <location>
        <begin position="1"/>
        <end position="448"/>
    </location>
</feature>
<feature type="DNA-binding region" description="Homeobox; TALE-type" evidence="3">
    <location>
        <begin position="108"/>
        <end position="170"/>
    </location>
</feature>
<feature type="region of interest" description="Disordered" evidence="4">
    <location>
        <begin position="171"/>
        <end position="250"/>
    </location>
</feature>
<feature type="region of interest" description="Disordered" evidence="4">
    <location>
        <begin position="387"/>
        <end position="410"/>
    </location>
</feature>
<feature type="compositionally biased region" description="Acidic residues" evidence="4">
    <location>
        <begin position="195"/>
        <end position="222"/>
    </location>
</feature>
<feature type="compositionally biased region" description="Basic and acidic residues" evidence="4">
    <location>
        <begin position="223"/>
        <end position="237"/>
    </location>
</feature>
<feature type="compositionally biased region" description="Acidic residues" evidence="4">
    <location>
        <begin position="238"/>
        <end position="248"/>
    </location>
</feature>
<feature type="compositionally biased region" description="Basic and acidic residues" evidence="4">
    <location>
        <begin position="396"/>
        <end position="406"/>
    </location>
</feature>
<evidence type="ECO:0000250" key="1">
    <source>
        <dbReference type="UniProtKB" id="P78415"/>
    </source>
</evidence>
<evidence type="ECO:0000255" key="2"/>
<evidence type="ECO:0000255" key="3">
    <source>
        <dbReference type="PROSITE-ProRule" id="PRU00108"/>
    </source>
</evidence>
<evidence type="ECO:0000256" key="4">
    <source>
        <dbReference type="SAM" id="MobiDB-lite"/>
    </source>
</evidence>
<evidence type="ECO:0000269" key="5">
    <source>
    </source>
</evidence>
<evidence type="ECO:0000305" key="6"/>
<evidence type="ECO:0000312" key="7">
    <source>
        <dbReference type="EMBL" id="AAH67972.1"/>
    </source>
</evidence>
<evidence type="ECO:0000312" key="8">
    <source>
        <dbReference type="EMBL" id="CAJ82766.1"/>
    </source>
</evidence>
<sequence>MSFPQLGYQYIRPLYPSDRQNVGGTRSGTELSPAGTLSNVLSSVYGTPYAAAAAAQAYGAFLPYSAELPIFPQLGSQYEMKDSPGVQHAAFSHPHAAFYPYGQYQFGDPSRPKNATRESTSTLKAWLNEHRKNPYPTKGEKIMLAIITKMTLTQVSTWFANARRRLKKENKMTWAPRSRTDEEGNAYGSDHEEDKHEDDEEIDLENIDTEDIESKEDLDDPDTDIHSDSKTDARSDSEASDGFEDLNAPEDRLLKSVVGQRQVLNEEPQDKCALSSDAKASQPACEQIKLDRIPSSPPLENNIPAAHKPKIWSLAETATTPDNPRRSPNTGGSVNTQNLIAQHRLIASPGSRFQGWTGRAFSAQQLSLLNSAHFLQGLSVSHTALGSGTASFPKAAEPKHSTDSLTDRSSTVDIEKKIPVLNTAFQPVQRRSQNQLDAAMILSALSSS</sequence>
<accession>Q6NVN3</accession>
<proteinExistence type="evidence at transcript level"/>
<organism>
    <name type="scientific">Xenopus tropicalis</name>
    <name type="common">Western clawed frog</name>
    <name type="synonym">Silurana tropicalis</name>
    <dbReference type="NCBI Taxonomy" id="8364"/>
    <lineage>
        <taxon>Eukaryota</taxon>
        <taxon>Metazoa</taxon>
        <taxon>Chordata</taxon>
        <taxon>Craniata</taxon>
        <taxon>Vertebrata</taxon>
        <taxon>Euteleostomi</taxon>
        <taxon>Amphibia</taxon>
        <taxon>Batrachia</taxon>
        <taxon>Anura</taxon>
        <taxon>Pipoidea</taxon>
        <taxon>Pipidae</taxon>
        <taxon>Xenopodinae</taxon>
        <taxon>Xenopus</taxon>
        <taxon>Silurana</taxon>
    </lineage>
</organism>
<name>IRX3_XENTR</name>
<gene>
    <name evidence="7" type="primary">irx3</name>
    <name type="ORF">TNeu131p22.1</name>
</gene>
<keyword id="KW-0010">Activator</keyword>
<keyword id="KW-0217">Developmental protein</keyword>
<keyword id="KW-0221">Differentiation</keyword>
<keyword id="KW-0238">DNA-binding</keyword>
<keyword id="KW-0371">Homeobox</keyword>
<keyword id="KW-0524">Neurogenesis</keyword>
<keyword id="KW-0539">Nucleus</keyword>
<keyword id="KW-1185">Reference proteome</keyword>
<keyword id="KW-0678">Repressor</keyword>
<keyword id="KW-0804">Transcription</keyword>
<keyword id="KW-0805">Transcription regulation</keyword>
<reference evidence="8" key="1">
    <citation type="submission" date="2006-10" db="EMBL/GenBank/DDBJ databases">
        <authorList>
            <consortium name="Sanger Xenopus tropicalis EST/cDNA project"/>
        </authorList>
    </citation>
    <scope>NUCLEOTIDE SEQUENCE [LARGE SCALE MRNA]</scope>
    <source>
        <tissue evidence="8">Neurula</tissue>
    </source>
</reference>
<reference evidence="8" key="2">
    <citation type="submission" date="2004-03" db="EMBL/GenBank/DDBJ databases">
        <authorList>
            <consortium name="NIH - Xenopus Gene Collection (XGC) project"/>
        </authorList>
    </citation>
    <scope>NUCLEOTIDE SEQUENCE [LARGE SCALE MRNA]</scope>
    <source>
        <tissue evidence="7">Tail bud</tissue>
    </source>
</reference>
<reference key="3">
    <citation type="journal article" date="2009" name="Dev. Biol.">
        <title>The Xenopus Irx genes are essential for neural patterning and define the border between prethalamus and thalamus through mutual antagonism with the anterior repressors Fezf and Arx.</title>
        <authorList>
            <person name="Rodriguez-Seguel E."/>
            <person name="Alarcon P."/>
            <person name="Gomez-Skarmeta J.L."/>
        </authorList>
    </citation>
    <scope>FUNCTION</scope>
    <scope>TISSUE SPECIFICITY</scope>
</reference>
<comment type="function">
    <text evidence="5">Acts partially redundantly with other irx members in neural patterning. Required for formation of the posterior forebrain, midbrain, hindbrain, and to a lesser extent, spinal cord. Both up-regulates and down-regulates gene expression during neural development. Acts early in neural plate development to induce proneural gene expression and specify a neural precursor state. Also up-regulates repressors that prevent neuronal differentiation. Required during at least two stages of pronephros kidney development; during neurula stages, maintains transcription of key renal genes to define the size and identity of the pronephric anlage, probably in part through regulation of bmp-signaling. Subsequently required for proper formation of the intermediate tubule segment of the pronephros.</text>
</comment>
<comment type="subcellular location">
    <subcellularLocation>
        <location evidence="2 6">Nucleus</location>
    </subcellularLocation>
</comment>
<comment type="tissue specificity">
    <text evidence="5">Expressed in the neural plate in overlapping patterns with other irx members, which all share an anterior border of expression. Outside the nervous system and at tailbud stages, expressed in the developing otic vesicle, branchial arches, prospective heart region and pronephros.</text>
</comment>
<comment type="similarity">
    <text evidence="2">Belongs to the TALE/IRO homeobox family.</text>
</comment>